<keyword id="KW-0028">Amino-acid biosynthesis</keyword>
<keyword id="KW-0963">Cytoplasm</keyword>
<keyword id="KW-0521">NADP</keyword>
<keyword id="KW-0560">Oxidoreductase</keyword>
<keyword id="KW-0641">Proline biosynthesis</keyword>
<protein>
    <recommendedName>
        <fullName evidence="1">Gamma-glutamyl phosphate reductase</fullName>
        <shortName evidence="1">GPR</shortName>
        <ecNumber evidence="1">1.2.1.41</ecNumber>
    </recommendedName>
    <alternativeName>
        <fullName evidence="1">Glutamate-5-semialdehyde dehydrogenase</fullName>
    </alternativeName>
    <alternativeName>
        <fullName evidence="1">Glutamyl-gamma-semialdehyde dehydrogenase</fullName>
        <shortName evidence="1">GSA dehydrogenase</shortName>
    </alternativeName>
</protein>
<evidence type="ECO:0000255" key="1">
    <source>
        <dbReference type="HAMAP-Rule" id="MF_00412"/>
    </source>
</evidence>
<reference key="1">
    <citation type="submission" date="2008-04" db="EMBL/GenBank/DDBJ databases">
        <title>Complete sequence of chromosome of Methylobacterium populi BJ001.</title>
        <authorList>
            <consortium name="US DOE Joint Genome Institute"/>
            <person name="Copeland A."/>
            <person name="Lucas S."/>
            <person name="Lapidus A."/>
            <person name="Glavina del Rio T."/>
            <person name="Dalin E."/>
            <person name="Tice H."/>
            <person name="Bruce D."/>
            <person name="Goodwin L."/>
            <person name="Pitluck S."/>
            <person name="Chertkov O."/>
            <person name="Brettin T."/>
            <person name="Detter J.C."/>
            <person name="Han C."/>
            <person name="Kuske C.R."/>
            <person name="Schmutz J."/>
            <person name="Larimer F."/>
            <person name="Land M."/>
            <person name="Hauser L."/>
            <person name="Kyrpides N."/>
            <person name="Mikhailova N."/>
            <person name="Marx C."/>
            <person name="Richardson P."/>
        </authorList>
    </citation>
    <scope>NUCLEOTIDE SEQUENCE [LARGE SCALE GENOMIC DNA]</scope>
    <source>
        <strain>ATCC BAA-705 / NCIMB 13946 / BJ001</strain>
    </source>
</reference>
<comment type="function">
    <text evidence="1">Catalyzes the NADPH-dependent reduction of L-glutamate 5-phosphate into L-glutamate 5-semialdehyde and phosphate. The product spontaneously undergoes cyclization to form 1-pyrroline-5-carboxylate.</text>
</comment>
<comment type="catalytic activity">
    <reaction evidence="1">
        <text>L-glutamate 5-semialdehyde + phosphate + NADP(+) = L-glutamyl 5-phosphate + NADPH + H(+)</text>
        <dbReference type="Rhea" id="RHEA:19541"/>
        <dbReference type="ChEBI" id="CHEBI:15378"/>
        <dbReference type="ChEBI" id="CHEBI:43474"/>
        <dbReference type="ChEBI" id="CHEBI:57783"/>
        <dbReference type="ChEBI" id="CHEBI:58066"/>
        <dbReference type="ChEBI" id="CHEBI:58274"/>
        <dbReference type="ChEBI" id="CHEBI:58349"/>
        <dbReference type="EC" id="1.2.1.41"/>
    </reaction>
</comment>
<comment type="pathway">
    <text evidence="1">Amino-acid biosynthesis; L-proline biosynthesis; L-glutamate 5-semialdehyde from L-glutamate: step 2/2.</text>
</comment>
<comment type="subcellular location">
    <subcellularLocation>
        <location evidence="1">Cytoplasm</location>
    </subcellularLocation>
</comment>
<comment type="similarity">
    <text evidence="1">Belongs to the gamma-glutamyl phosphate reductase family.</text>
</comment>
<dbReference type="EC" id="1.2.1.41" evidence="1"/>
<dbReference type="EMBL" id="CP001029">
    <property type="protein sequence ID" value="ACB81143.1"/>
    <property type="molecule type" value="Genomic_DNA"/>
</dbReference>
<dbReference type="RefSeq" id="WP_012454862.1">
    <property type="nucleotide sequence ID" value="NC_010725.1"/>
</dbReference>
<dbReference type="SMR" id="B1ZFJ0"/>
<dbReference type="STRING" id="441620.Mpop_2988"/>
<dbReference type="KEGG" id="mpo:Mpop_2988"/>
<dbReference type="eggNOG" id="COG0014">
    <property type="taxonomic scope" value="Bacteria"/>
</dbReference>
<dbReference type="HOGENOM" id="CLU_030231_0_0_5"/>
<dbReference type="OrthoDB" id="9809970at2"/>
<dbReference type="UniPathway" id="UPA00098">
    <property type="reaction ID" value="UER00360"/>
</dbReference>
<dbReference type="Proteomes" id="UP000007136">
    <property type="component" value="Chromosome"/>
</dbReference>
<dbReference type="GO" id="GO:0005737">
    <property type="term" value="C:cytoplasm"/>
    <property type="evidence" value="ECO:0007669"/>
    <property type="project" value="UniProtKB-SubCell"/>
</dbReference>
<dbReference type="GO" id="GO:0004350">
    <property type="term" value="F:glutamate-5-semialdehyde dehydrogenase activity"/>
    <property type="evidence" value="ECO:0007669"/>
    <property type="project" value="UniProtKB-UniRule"/>
</dbReference>
<dbReference type="GO" id="GO:0050661">
    <property type="term" value="F:NADP binding"/>
    <property type="evidence" value="ECO:0007669"/>
    <property type="project" value="InterPro"/>
</dbReference>
<dbReference type="GO" id="GO:0055129">
    <property type="term" value="P:L-proline biosynthetic process"/>
    <property type="evidence" value="ECO:0007669"/>
    <property type="project" value="UniProtKB-UniRule"/>
</dbReference>
<dbReference type="CDD" id="cd07079">
    <property type="entry name" value="ALDH_F18-19_ProA-GPR"/>
    <property type="match status" value="1"/>
</dbReference>
<dbReference type="FunFam" id="3.40.309.10:FF:000006">
    <property type="entry name" value="Gamma-glutamyl phosphate reductase"/>
    <property type="match status" value="1"/>
</dbReference>
<dbReference type="Gene3D" id="3.40.605.10">
    <property type="entry name" value="Aldehyde Dehydrogenase, Chain A, domain 1"/>
    <property type="match status" value="1"/>
</dbReference>
<dbReference type="Gene3D" id="3.40.309.10">
    <property type="entry name" value="Aldehyde Dehydrogenase, Chain A, domain 2"/>
    <property type="match status" value="1"/>
</dbReference>
<dbReference type="HAMAP" id="MF_00412">
    <property type="entry name" value="ProA"/>
    <property type="match status" value="1"/>
</dbReference>
<dbReference type="InterPro" id="IPR016161">
    <property type="entry name" value="Ald_DH/histidinol_DH"/>
</dbReference>
<dbReference type="InterPro" id="IPR016163">
    <property type="entry name" value="Ald_DH_C"/>
</dbReference>
<dbReference type="InterPro" id="IPR016162">
    <property type="entry name" value="Ald_DH_N"/>
</dbReference>
<dbReference type="InterPro" id="IPR015590">
    <property type="entry name" value="Aldehyde_DH_dom"/>
</dbReference>
<dbReference type="InterPro" id="IPR020593">
    <property type="entry name" value="G-glutamylP_reductase_CS"/>
</dbReference>
<dbReference type="InterPro" id="IPR012134">
    <property type="entry name" value="Glu-5-SA_DH"/>
</dbReference>
<dbReference type="InterPro" id="IPR000965">
    <property type="entry name" value="GPR_dom"/>
</dbReference>
<dbReference type="NCBIfam" id="NF001221">
    <property type="entry name" value="PRK00197.1"/>
    <property type="match status" value="1"/>
</dbReference>
<dbReference type="NCBIfam" id="TIGR00407">
    <property type="entry name" value="proA"/>
    <property type="match status" value="1"/>
</dbReference>
<dbReference type="PANTHER" id="PTHR11063:SF8">
    <property type="entry name" value="DELTA-1-PYRROLINE-5-CARBOXYLATE SYNTHASE"/>
    <property type="match status" value="1"/>
</dbReference>
<dbReference type="PANTHER" id="PTHR11063">
    <property type="entry name" value="GLUTAMATE SEMIALDEHYDE DEHYDROGENASE"/>
    <property type="match status" value="1"/>
</dbReference>
<dbReference type="Pfam" id="PF00171">
    <property type="entry name" value="Aldedh"/>
    <property type="match status" value="1"/>
</dbReference>
<dbReference type="PIRSF" id="PIRSF000151">
    <property type="entry name" value="GPR"/>
    <property type="match status" value="1"/>
</dbReference>
<dbReference type="SUPFAM" id="SSF53720">
    <property type="entry name" value="ALDH-like"/>
    <property type="match status" value="1"/>
</dbReference>
<dbReference type="PROSITE" id="PS01223">
    <property type="entry name" value="PROA"/>
    <property type="match status" value="1"/>
</dbReference>
<gene>
    <name evidence="1" type="primary">proA</name>
    <name type="ordered locus">Mpop_2988</name>
</gene>
<accession>B1ZFJ0</accession>
<name>PROA_METPB</name>
<sequence>MPVLNLKSGFADADDLDTLMAGIGRRARAAGRAMALAPAQTKDLALRAIAEQIRASAATILRENARDVSAAQAAGQTKAIIDRLTLDEGRVAAIAEAVEKVASLPDPVGRQLAAFERPNGLLIERISVPLGVVGVIFESRPNVTADAGALCLKAGNAAILRAGSDSHRTATAIAAAMSEGLARTGLPADAIQLVPTRDRAAVGLMLTGLGGCVDVIVPRGGRSLVERVQAEAKVPVFAHLDGICHVYIAEGADLGMARTVLLNSKMRRTGICGAAETLLVDAAVAKTHLKPLVEALLESGCAVRGDAATQGVDPRVTPADEADWRTEYLDAIISAKVVDGLDAAIAHIEANGSHHTDAIITDDTEAAARFLNEVDSAIVTHNASTQFADGGEFGFGAEIGIATGRMHARGPVGVEQLTTFKYRVHGSGQTRP</sequence>
<organism>
    <name type="scientific">Methylorubrum populi (strain ATCC BAA-705 / NCIMB 13946 / BJ001)</name>
    <name type="common">Methylobacterium populi</name>
    <dbReference type="NCBI Taxonomy" id="441620"/>
    <lineage>
        <taxon>Bacteria</taxon>
        <taxon>Pseudomonadati</taxon>
        <taxon>Pseudomonadota</taxon>
        <taxon>Alphaproteobacteria</taxon>
        <taxon>Hyphomicrobiales</taxon>
        <taxon>Methylobacteriaceae</taxon>
        <taxon>Methylorubrum</taxon>
    </lineage>
</organism>
<proteinExistence type="inferred from homology"/>
<feature type="chain" id="PRO_1000193624" description="Gamma-glutamyl phosphate reductase">
    <location>
        <begin position="1"/>
        <end position="432"/>
    </location>
</feature>